<protein>
    <recommendedName>
        <fullName>DIS3-like exonuclease 1</fullName>
        <ecNumber evidence="4 5 6">3.1.13.1</ecNumber>
    </recommendedName>
</protein>
<name>DI3L1_HUMAN</name>
<feature type="chain" id="PRO_0000314810" description="DIS3-like exonuclease 1">
    <location>
        <begin position="1"/>
        <end position="1054"/>
    </location>
</feature>
<feature type="domain" description="CSD1" evidence="1">
    <location>
        <begin position="236"/>
        <end position="309"/>
    </location>
</feature>
<feature type="domain" description="CSD2" evidence="1">
    <location>
        <begin position="365"/>
        <end position="431"/>
    </location>
</feature>
<feature type="domain" description="RNB" evidence="1">
    <location>
        <begin position="465"/>
        <end position="816"/>
    </location>
</feature>
<feature type="modified residue" description="Phosphoserine" evidence="11">
    <location>
        <position position="989"/>
    </location>
</feature>
<feature type="splice variant" id="VSP_030366" description="In isoform 2." evidence="7">
    <location>
        <begin position="1"/>
        <end position="134"/>
    </location>
</feature>
<feature type="splice variant" id="VSP_030367" description="In isoform 4." evidence="9">
    <location>
        <begin position="1"/>
        <end position="83"/>
    </location>
</feature>
<feature type="splice variant" id="VSP_030368" description="In isoform 3." evidence="8">
    <original>SNKTLADSLDNANDPH</original>
    <variation>YSSFEGAEEWSGMLYI</variation>
    <location>
        <begin position="735"/>
        <end position="750"/>
    </location>
</feature>
<feature type="splice variant" id="VSP_030369" description="In isoform 3." evidence="8">
    <location>
        <begin position="751"/>
        <end position="1054"/>
    </location>
</feature>
<feature type="sequence variant" id="VAR_038056" description="In dbSNP:rs34668776.">
    <original>I</original>
    <variation>V</variation>
    <location>
        <position position="518"/>
    </location>
</feature>
<feature type="sequence variant" id="VAR_038057" description="In dbSNP:rs3803412." evidence="2 3">
    <original>D</original>
    <variation>G</variation>
    <location>
        <position position="614"/>
    </location>
</feature>
<feature type="sequence variant" id="VAR_038058" description="In dbSNP:rs17258507.">
    <original>N</original>
    <variation>S</variation>
    <location>
        <position position="747"/>
    </location>
</feature>
<feature type="mutagenesis site" description="No change of exonuclease activity." evidence="5">
    <original>D</original>
    <variation>N</variation>
    <location>
        <position position="62"/>
    </location>
</feature>
<feature type="mutagenesis site" description="No change of exonuclease activity." evidence="5">
    <original>D</original>
    <variation>N</variation>
    <location>
        <position position="166"/>
    </location>
</feature>
<feature type="mutagenesis site" description="Complete loss of exonuclease activity." evidence="4 5">
    <original>D</original>
    <variation>N</variation>
    <location>
        <position position="486"/>
    </location>
</feature>
<keyword id="KW-0002">3D-structure</keyword>
<keyword id="KW-0025">Alternative splicing</keyword>
<keyword id="KW-0963">Cytoplasm</keyword>
<keyword id="KW-0269">Exonuclease</keyword>
<keyword id="KW-0271">Exosome</keyword>
<keyword id="KW-0378">Hydrolase</keyword>
<keyword id="KW-0460">Magnesium</keyword>
<keyword id="KW-0540">Nuclease</keyword>
<keyword id="KW-0597">Phosphoprotein</keyword>
<keyword id="KW-1267">Proteomics identification</keyword>
<keyword id="KW-1185">Reference proteome</keyword>
<keyword id="KW-0694">RNA-binding</keyword>
<reference key="1">
    <citation type="journal article" date="2001" name="DNA Res.">
        <title>Prediction of the coding sequences of unidentified human genes. XXII. The complete sequences of 50 new cDNA clones which code for large proteins.</title>
        <authorList>
            <person name="Nagase T."/>
            <person name="Kikuno R."/>
            <person name="Ohara O."/>
        </authorList>
    </citation>
    <scope>NUCLEOTIDE SEQUENCE [LARGE SCALE MRNA] (ISOFORM 2)</scope>
    <source>
        <tissue>Brain</tissue>
    </source>
</reference>
<reference key="2">
    <citation type="journal article" date="2004" name="Nat. Genet.">
        <title>Complete sequencing and characterization of 21,243 full-length human cDNAs.</title>
        <authorList>
            <person name="Ota T."/>
            <person name="Suzuki Y."/>
            <person name="Nishikawa T."/>
            <person name="Otsuki T."/>
            <person name="Sugiyama T."/>
            <person name="Irie R."/>
            <person name="Wakamatsu A."/>
            <person name="Hayashi K."/>
            <person name="Sato H."/>
            <person name="Nagai K."/>
            <person name="Kimura K."/>
            <person name="Makita H."/>
            <person name="Sekine M."/>
            <person name="Obayashi M."/>
            <person name="Nishi T."/>
            <person name="Shibahara T."/>
            <person name="Tanaka T."/>
            <person name="Ishii S."/>
            <person name="Yamamoto J."/>
            <person name="Saito K."/>
            <person name="Kawai Y."/>
            <person name="Isono Y."/>
            <person name="Nakamura Y."/>
            <person name="Nagahari K."/>
            <person name="Murakami K."/>
            <person name="Yasuda T."/>
            <person name="Iwayanagi T."/>
            <person name="Wagatsuma M."/>
            <person name="Shiratori A."/>
            <person name="Sudo H."/>
            <person name="Hosoiri T."/>
            <person name="Kaku Y."/>
            <person name="Kodaira H."/>
            <person name="Kondo H."/>
            <person name="Sugawara M."/>
            <person name="Takahashi M."/>
            <person name="Kanda K."/>
            <person name="Yokoi T."/>
            <person name="Furuya T."/>
            <person name="Kikkawa E."/>
            <person name="Omura Y."/>
            <person name="Abe K."/>
            <person name="Kamihara K."/>
            <person name="Katsuta N."/>
            <person name="Sato K."/>
            <person name="Tanikawa M."/>
            <person name="Yamazaki M."/>
            <person name="Ninomiya K."/>
            <person name="Ishibashi T."/>
            <person name="Yamashita H."/>
            <person name="Murakawa K."/>
            <person name="Fujimori K."/>
            <person name="Tanai H."/>
            <person name="Kimata M."/>
            <person name="Watanabe M."/>
            <person name="Hiraoka S."/>
            <person name="Chiba Y."/>
            <person name="Ishida S."/>
            <person name="Ono Y."/>
            <person name="Takiguchi S."/>
            <person name="Watanabe S."/>
            <person name="Yosida M."/>
            <person name="Hotuta T."/>
            <person name="Kusano J."/>
            <person name="Kanehori K."/>
            <person name="Takahashi-Fujii A."/>
            <person name="Hara H."/>
            <person name="Tanase T.-O."/>
            <person name="Nomura Y."/>
            <person name="Togiya S."/>
            <person name="Komai F."/>
            <person name="Hara R."/>
            <person name="Takeuchi K."/>
            <person name="Arita M."/>
            <person name="Imose N."/>
            <person name="Musashino K."/>
            <person name="Yuuki H."/>
            <person name="Oshima A."/>
            <person name="Sasaki N."/>
            <person name="Aotsuka S."/>
            <person name="Yoshikawa Y."/>
            <person name="Matsunawa H."/>
            <person name="Ichihara T."/>
            <person name="Shiohata N."/>
            <person name="Sano S."/>
            <person name="Moriya S."/>
            <person name="Momiyama H."/>
            <person name="Satoh N."/>
            <person name="Takami S."/>
            <person name="Terashima Y."/>
            <person name="Suzuki O."/>
            <person name="Nakagawa S."/>
            <person name="Senoh A."/>
            <person name="Mizoguchi H."/>
            <person name="Goto Y."/>
            <person name="Shimizu F."/>
            <person name="Wakebe H."/>
            <person name="Hishigaki H."/>
            <person name="Watanabe T."/>
            <person name="Sugiyama A."/>
            <person name="Takemoto M."/>
            <person name="Kawakami B."/>
            <person name="Yamazaki M."/>
            <person name="Watanabe K."/>
            <person name="Kumagai A."/>
            <person name="Itakura S."/>
            <person name="Fukuzumi Y."/>
            <person name="Fujimori Y."/>
            <person name="Komiyama M."/>
            <person name="Tashiro H."/>
            <person name="Tanigami A."/>
            <person name="Fujiwara T."/>
            <person name="Ono T."/>
            <person name="Yamada K."/>
            <person name="Fujii Y."/>
            <person name="Ozaki K."/>
            <person name="Hirao M."/>
            <person name="Ohmori Y."/>
            <person name="Kawabata A."/>
            <person name="Hikiji T."/>
            <person name="Kobatake N."/>
            <person name="Inagaki H."/>
            <person name="Ikema Y."/>
            <person name="Okamoto S."/>
            <person name="Okitani R."/>
            <person name="Kawakami T."/>
            <person name="Noguchi S."/>
            <person name="Itoh T."/>
            <person name="Shigeta K."/>
            <person name="Senba T."/>
            <person name="Matsumura K."/>
            <person name="Nakajima Y."/>
            <person name="Mizuno T."/>
            <person name="Morinaga M."/>
            <person name="Sasaki M."/>
            <person name="Togashi T."/>
            <person name="Oyama M."/>
            <person name="Hata H."/>
            <person name="Watanabe M."/>
            <person name="Komatsu T."/>
            <person name="Mizushima-Sugano J."/>
            <person name="Satoh T."/>
            <person name="Shirai Y."/>
            <person name="Takahashi Y."/>
            <person name="Nakagawa K."/>
            <person name="Okumura K."/>
            <person name="Nagase T."/>
            <person name="Nomura N."/>
            <person name="Kikuchi H."/>
            <person name="Masuho Y."/>
            <person name="Yamashita R."/>
            <person name="Nakai K."/>
            <person name="Yada T."/>
            <person name="Nakamura Y."/>
            <person name="Ohara O."/>
            <person name="Isogai T."/>
            <person name="Sugano S."/>
        </authorList>
    </citation>
    <scope>NUCLEOTIDE SEQUENCE [LARGE SCALE MRNA] (ISOFORM 3)</scope>
    <scope>VARIANT GLY-614</scope>
    <source>
        <tissue>Tongue</tissue>
    </source>
</reference>
<reference key="3">
    <citation type="journal article" date="2006" name="Nature">
        <title>Analysis of the DNA sequence and duplication history of human chromosome 15.</title>
        <authorList>
            <person name="Zody M.C."/>
            <person name="Garber M."/>
            <person name="Sharpe T."/>
            <person name="Young S.K."/>
            <person name="Rowen L."/>
            <person name="O'Neill K."/>
            <person name="Whittaker C.A."/>
            <person name="Kamal M."/>
            <person name="Chang J.L."/>
            <person name="Cuomo C.A."/>
            <person name="Dewar K."/>
            <person name="FitzGerald M.G."/>
            <person name="Kodira C.D."/>
            <person name="Madan A."/>
            <person name="Qin S."/>
            <person name="Yang X."/>
            <person name="Abbasi N."/>
            <person name="Abouelleil A."/>
            <person name="Arachchi H.M."/>
            <person name="Baradarani L."/>
            <person name="Birditt B."/>
            <person name="Bloom S."/>
            <person name="Bloom T."/>
            <person name="Borowsky M.L."/>
            <person name="Burke J."/>
            <person name="Butler J."/>
            <person name="Cook A."/>
            <person name="DeArellano K."/>
            <person name="DeCaprio D."/>
            <person name="Dorris L. III"/>
            <person name="Dors M."/>
            <person name="Eichler E.E."/>
            <person name="Engels R."/>
            <person name="Fahey J."/>
            <person name="Fleetwood P."/>
            <person name="Friedman C."/>
            <person name="Gearin G."/>
            <person name="Hall J.L."/>
            <person name="Hensley G."/>
            <person name="Johnson E."/>
            <person name="Jones C."/>
            <person name="Kamat A."/>
            <person name="Kaur A."/>
            <person name="Locke D.P."/>
            <person name="Madan A."/>
            <person name="Munson G."/>
            <person name="Jaffe D.B."/>
            <person name="Lui A."/>
            <person name="Macdonald P."/>
            <person name="Mauceli E."/>
            <person name="Naylor J.W."/>
            <person name="Nesbitt R."/>
            <person name="Nicol R."/>
            <person name="O'Leary S.B."/>
            <person name="Ratcliffe A."/>
            <person name="Rounsley S."/>
            <person name="She X."/>
            <person name="Sneddon K.M.B."/>
            <person name="Stewart S."/>
            <person name="Sougnez C."/>
            <person name="Stone S.M."/>
            <person name="Topham K."/>
            <person name="Vincent D."/>
            <person name="Wang S."/>
            <person name="Zimmer A.R."/>
            <person name="Birren B.W."/>
            <person name="Hood L."/>
            <person name="Lander E.S."/>
            <person name="Nusbaum C."/>
        </authorList>
    </citation>
    <scope>NUCLEOTIDE SEQUENCE [LARGE SCALE GENOMIC DNA]</scope>
</reference>
<reference key="4">
    <citation type="submission" date="2005-07" db="EMBL/GenBank/DDBJ databases">
        <authorList>
            <person name="Mural R.J."/>
            <person name="Istrail S."/>
            <person name="Sutton G.G."/>
            <person name="Florea L."/>
            <person name="Halpern A.L."/>
            <person name="Mobarry C.M."/>
            <person name="Lippert R."/>
            <person name="Walenz B."/>
            <person name="Shatkay H."/>
            <person name="Dew I."/>
            <person name="Miller J.R."/>
            <person name="Flanigan M.J."/>
            <person name="Edwards N.J."/>
            <person name="Bolanos R."/>
            <person name="Fasulo D."/>
            <person name="Halldorsson B.V."/>
            <person name="Hannenhalli S."/>
            <person name="Turner R."/>
            <person name="Yooseph S."/>
            <person name="Lu F."/>
            <person name="Nusskern D.R."/>
            <person name="Shue B.C."/>
            <person name="Zheng X.H."/>
            <person name="Zhong F."/>
            <person name="Delcher A.L."/>
            <person name="Huson D.H."/>
            <person name="Kravitz S.A."/>
            <person name="Mouchard L."/>
            <person name="Reinert K."/>
            <person name="Remington K.A."/>
            <person name="Clark A.G."/>
            <person name="Waterman M.S."/>
            <person name="Eichler E.E."/>
            <person name="Adams M.D."/>
            <person name="Hunkapiller M.W."/>
            <person name="Myers E.W."/>
            <person name="Venter J.C."/>
        </authorList>
    </citation>
    <scope>NUCLEOTIDE SEQUENCE [LARGE SCALE GENOMIC DNA]</scope>
</reference>
<reference key="5">
    <citation type="journal article" date="2004" name="Genome Res.">
        <title>The status, quality, and expansion of the NIH full-length cDNA project: the Mammalian Gene Collection (MGC).</title>
        <authorList>
            <consortium name="The MGC Project Team"/>
        </authorList>
    </citation>
    <scope>NUCLEOTIDE SEQUENCE [LARGE SCALE MRNA] (ISOFORM 4)</scope>
    <scope>VARIANT GLY-614</scope>
    <source>
        <tissue>Kidney</tissue>
        <tissue>Muscle</tissue>
    </source>
</reference>
<reference key="6">
    <citation type="journal article" date="2010" name="EMBO J.">
        <title>The human core exosome interacts with differentially localized processive RNases: hDIS3 and hDIS3L.</title>
        <authorList>
            <person name="Tomecki R."/>
            <person name="Kristiansen M.S."/>
            <person name="Lykke-Andersen S."/>
            <person name="Chlebowski A."/>
            <person name="Larsen K.M."/>
            <person name="Szczesny R.J."/>
            <person name="Drazkowska K."/>
            <person name="Pastula A."/>
            <person name="Andersen J.S."/>
            <person name="Stepien P.P."/>
            <person name="Dziembowski A."/>
            <person name="Jensen T.H."/>
        </authorList>
    </citation>
    <scope>ASSOCIATION WITH THE RNA EXOSOME COMPLEX</scope>
    <scope>IDENTIFICATION BY MASS SPECTROMETRY</scope>
    <scope>FUNCTION</scope>
    <scope>COFACTOR</scope>
    <scope>SUBCELLULAR LOCATION</scope>
    <scope>MUTAGENESIS OF ASP-486</scope>
    <scope>CATALYTIC ACTIVITY</scope>
</reference>
<reference key="7">
    <citation type="journal article" date="2010" name="EMBO J.">
        <title>Dis3-like 1: a novel exoribonuclease associated with the human exosome.</title>
        <authorList>
            <person name="Staals R.H."/>
            <person name="Bronkhorst A.W."/>
            <person name="Schilders G."/>
            <person name="Slomovic S."/>
            <person name="Schuster G."/>
            <person name="Heck A.J."/>
            <person name="Raijmakers R."/>
            <person name="Pruijn G.J."/>
        </authorList>
    </citation>
    <scope>FUNCTION</scope>
    <scope>COFACTOR</scope>
    <scope>SUBCELLULAR LOCATION</scope>
    <scope>MUTAGENESIS OF ASP-62; ASP-166 AND ASP-486</scope>
    <scope>ASSOCIATION WITH THE RNA EXOSOME COMPLEX</scope>
    <scope>CATALYTIC ACTIVITY</scope>
</reference>
<reference key="8">
    <citation type="journal article" date="2011" name="BMC Syst. Biol.">
        <title>Initial characterization of the human central proteome.</title>
        <authorList>
            <person name="Burkard T.R."/>
            <person name="Planyavsky M."/>
            <person name="Kaupe I."/>
            <person name="Breitwieser F.P."/>
            <person name="Buerckstuemmer T."/>
            <person name="Bennett K.L."/>
            <person name="Superti-Furga G."/>
            <person name="Colinge J."/>
        </authorList>
    </citation>
    <scope>IDENTIFICATION BY MASS SPECTROMETRY [LARGE SCALE ANALYSIS]</scope>
</reference>
<reference key="9">
    <citation type="journal article" date="2013" name="J. Proteome Res.">
        <title>Toward a comprehensive characterization of a human cancer cell phosphoproteome.</title>
        <authorList>
            <person name="Zhou H."/>
            <person name="Di Palma S."/>
            <person name="Preisinger C."/>
            <person name="Peng M."/>
            <person name="Polat A.N."/>
            <person name="Heck A.J."/>
            <person name="Mohammed S."/>
        </authorList>
    </citation>
    <scope>PHOSPHORYLATION [LARGE SCALE ANALYSIS] AT SER-989</scope>
    <scope>IDENTIFICATION BY MASS SPECTROMETRY [LARGE SCALE ANALYSIS]</scope>
    <source>
        <tissue>Cervix carcinoma</tissue>
        <tissue>Erythroleukemia</tissue>
    </source>
</reference>
<reference key="10">
    <citation type="journal article" date="2023" name="Nucleic Acids Res.">
        <title>HELZ2: a new, interferon-regulated, human 3'-5' exoribonuclease of the RNB family is expressed from a non-canonical initiation codon.</title>
        <authorList>
            <person name="Huntzinger E."/>
            <person name="Sinteff J."/>
            <person name="Morlet B."/>
            <person name="Seraphin B."/>
        </authorList>
    </citation>
    <scope>FUNCTION</scope>
    <scope>CATALYTIC ACTIVITY</scope>
</reference>
<sequence>MLQKREKVLLLRTFQGRTLRIVREHYLRPCVPCHSPLCPQPAACSHDGKLLSSDVTHYVIPDWKVVQDYLEILEFPELKGIIFMQTACQAVQHQRGRRQYNKLRNLLKDARHDCILFANEFQQCCYLPRERGESMEKWQTRSIYNAAVWYYHHCQDRMPIVMVTEDEEAIQQYGSETEGVFVITFKNYLDNFWPDLKAAHELCDSILQSRRERENESQESHGKEYPEHLPLEVLEAGIKSGRYIQGILNVNKHRAQIEAFVRLQGASSKDSDLVSDILIHGMKARNRSIHGDVVVVELLPKNEWKGRTVALCENDCDDKASGESPSEPMPTGRVVGILQKNWRDYVVTFPSKEEVQSQGKNAQKILVTPWDYRIPKIRISTQQAETLQDFRVVVRIDSWESTSVYPNGHFVRVLGRIGDLEGEIATILVENSISVIPFSEAQMCEMPVNTPESPWKVSPEEEQKRKDLRKSHLVFSIDPKGCEDVDDTLSVRTLNNGNLELGVHIADVTHFVAPNSYIDIEARTRATTYYLADRRYDMLPSVLSADLCSLLGGVDRYAVSIMWELDKASYEIKKVWYGRTIIRSAYKLFYEAAQELLDGNLSVVDDIPEFKDLDEKSRQAKLEELVWAIGKLTDIARHVRAKRDGCGALELEGVEVCVQLDDKKNIHDLIPKQPLEVHETVAECMILANHWVAKKIWESFPHQALLRQHPPPHQEFFSELRECAKAKGFFIDTRSNKTLADSLDNANDPHDPIVNRLLRSMATQAMSNALYFSTGSCAEEEFHHYGLALDKYTHFTSPIRRYSDIVVHRLLMAAISKDKKMEIKGNLFSNKDLEELCRHINNRNQAAQHSQKQSTELFQCMYFKDKDPATEERCISDGVIYSIRTNGVLLFIPRFGIKGAAYLKNKDGLVISCGPDSCSEWKPGSLQRFQNKITSTTTDGESVTFHLFDHVTVRISIQASRCHSDTIRLEIISNKPYKIPNTELIHQSSPLLKSELVKEVTKSVEEAQLAQEVKVNIIQEEYQEYRQTKGRSLYTLLEEIRDLALLDVSNNYGI</sequence>
<proteinExistence type="evidence at protein level"/>
<dbReference type="EC" id="3.1.13.1" evidence="4 5 6"/>
<dbReference type="EMBL" id="AB075835">
    <property type="protein sequence ID" value="BAB85541.1"/>
    <property type="status" value="ALT_INIT"/>
    <property type="molecule type" value="mRNA"/>
</dbReference>
<dbReference type="EMBL" id="AK095407">
    <property type="protein sequence ID" value="BAC04542.1"/>
    <property type="molecule type" value="mRNA"/>
</dbReference>
<dbReference type="EMBL" id="AC055855">
    <property type="status" value="NOT_ANNOTATED_CDS"/>
    <property type="molecule type" value="Genomic_DNA"/>
</dbReference>
<dbReference type="EMBL" id="CH471082">
    <property type="protein sequence ID" value="EAW77759.1"/>
    <property type="molecule type" value="Genomic_DNA"/>
</dbReference>
<dbReference type="EMBL" id="BC014124">
    <property type="protein sequence ID" value="AAH14124.2"/>
    <property type="molecule type" value="mRNA"/>
</dbReference>
<dbReference type="EMBL" id="BC022089">
    <property type="protein sequence ID" value="AAH22089.1"/>
    <property type="molecule type" value="mRNA"/>
</dbReference>
<dbReference type="CCDS" id="CCDS10214.1">
    <molecule id="Q8TF46-4"/>
</dbReference>
<dbReference type="CCDS" id="CCDS45286.1">
    <molecule id="Q8TF46-1"/>
</dbReference>
<dbReference type="RefSeq" id="NP_001137160.1">
    <molecule id="Q8TF46-1"/>
    <property type="nucleotide sequence ID" value="NM_001143688.3"/>
</dbReference>
<dbReference type="RefSeq" id="NP_001310865.1">
    <molecule id="Q8TF46-4"/>
    <property type="nucleotide sequence ID" value="NM_001323936.2"/>
</dbReference>
<dbReference type="RefSeq" id="NP_001310867.1">
    <molecule id="Q8TF46-2"/>
    <property type="nucleotide sequence ID" value="NM_001323938.2"/>
</dbReference>
<dbReference type="RefSeq" id="NP_001310868.1">
    <molecule id="Q8TF46-2"/>
    <property type="nucleotide sequence ID" value="NM_001323939.2"/>
</dbReference>
<dbReference type="RefSeq" id="NP_001310870.1">
    <molecule id="Q8TF46-2"/>
    <property type="nucleotide sequence ID" value="NM_001323941.2"/>
</dbReference>
<dbReference type="RefSeq" id="NP_001310874.1">
    <molecule id="Q8TF46-4"/>
    <property type="nucleotide sequence ID" value="NM_001323945.2"/>
</dbReference>
<dbReference type="RefSeq" id="NP_001310875.1">
    <molecule id="Q8TF46-2"/>
    <property type="nucleotide sequence ID" value="NM_001323946.2"/>
</dbReference>
<dbReference type="RefSeq" id="NP_588616.1">
    <molecule id="Q8TF46-4"/>
    <property type="nucleotide sequence ID" value="NM_133375.5"/>
</dbReference>
<dbReference type="PDB" id="9G8M">
    <property type="method" value="EM"/>
    <property type="resolution" value="3.30 A"/>
    <property type="chains" value="M=1-1054"/>
</dbReference>
<dbReference type="PDB" id="9G8N">
    <property type="method" value="EM"/>
    <property type="resolution" value="3.70 A"/>
    <property type="chains" value="M=1-1054"/>
</dbReference>
<dbReference type="PDB" id="9G8O">
    <property type="method" value="EM"/>
    <property type="resolution" value="3.40 A"/>
    <property type="chains" value="M=1-1054"/>
</dbReference>
<dbReference type="PDB" id="9G8P">
    <property type="method" value="EM"/>
    <property type="resolution" value="7.00 A"/>
    <property type="chains" value="M=1-1054"/>
</dbReference>
<dbReference type="PDBsum" id="9G8M"/>
<dbReference type="PDBsum" id="9G8N"/>
<dbReference type="PDBsum" id="9G8O"/>
<dbReference type="PDBsum" id="9G8P"/>
<dbReference type="EMDB" id="EMD-51132"/>
<dbReference type="EMDB" id="EMD-51133"/>
<dbReference type="EMDB" id="EMD-51134"/>
<dbReference type="EMDB" id="EMD-51135"/>
<dbReference type="EMDB" id="EMD-7818"/>
<dbReference type="EMDB" id="EMD-7819"/>
<dbReference type="SMR" id="Q8TF46"/>
<dbReference type="BioGRID" id="125453">
    <property type="interactions" value="54"/>
</dbReference>
<dbReference type="ComplexPortal" id="CPX-592">
    <property type="entry name" value="Cytoplasmic exosome complex, DIS3L variant"/>
</dbReference>
<dbReference type="ComplexPortal" id="CPX-600">
    <property type="entry name" value="Cytoplasmic exosome complex, DIS3L-EXOSC10 variant"/>
</dbReference>
<dbReference type="CORUM" id="Q8TF46"/>
<dbReference type="FunCoup" id="Q8TF46">
    <property type="interactions" value="273"/>
</dbReference>
<dbReference type="IntAct" id="Q8TF46">
    <property type="interactions" value="34"/>
</dbReference>
<dbReference type="MINT" id="Q8TF46"/>
<dbReference type="STRING" id="9606.ENSP00000321711"/>
<dbReference type="GlyGen" id="Q8TF46">
    <property type="glycosylation" value="1 site, 1 O-linked glycan (1 site)"/>
</dbReference>
<dbReference type="iPTMnet" id="Q8TF46"/>
<dbReference type="PhosphoSitePlus" id="Q8TF46"/>
<dbReference type="BioMuta" id="DIS3L"/>
<dbReference type="DMDM" id="166201903"/>
<dbReference type="jPOST" id="Q8TF46"/>
<dbReference type="MassIVE" id="Q8TF46"/>
<dbReference type="PaxDb" id="9606-ENSP00000321711"/>
<dbReference type="PeptideAtlas" id="Q8TF46"/>
<dbReference type="ProteomicsDB" id="74555">
    <molecule id="Q8TF46-1"/>
</dbReference>
<dbReference type="ProteomicsDB" id="74556">
    <molecule id="Q8TF46-2"/>
</dbReference>
<dbReference type="ProteomicsDB" id="74557">
    <molecule id="Q8TF46-3"/>
</dbReference>
<dbReference type="ProteomicsDB" id="74558">
    <molecule id="Q8TF46-4"/>
</dbReference>
<dbReference type="Pumba" id="Q8TF46"/>
<dbReference type="Antibodypedia" id="26111">
    <property type="antibodies" value="131 antibodies from 22 providers"/>
</dbReference>
<dbReference type="DNASU" id="115752"/>
<dbReference type="Ensembl" id="ENST00000319194.9">
    <molecule id="Q8TF46-4"/>
    <property type="protein sequence ID" value="ENSP00000321583.5"/>
    <property type="gene ID" value="ENSG00000166938.13"/>
</dbReference>
<dbReference type="Ensembl" id="ENST00000319212.9">
    <molecule id="Q8TF46-1"/>
    <property type="protein sequence ID" value="ENSP00000321711.4"/>
    <property type="gene ID" value="ENSG00000166938.13"/>
</dbReference>
<dbReference type="GeneID" id="115752"/>
<dbReference type="KEGG" id="hsa:115752"/>
<dbReference type="MANE-Select" id="ENST00000319212.9">
    <property type="protein sequence ID" value="ENSP00000321711.4"/>
    <property type="RefSeq nucleotide sequence ID" value="NM_001143688.3"/>
    <property type="RefSeq protein sequence ID" value="NP_001137160.1"/>
</dbReference>
<dbReference type="UCSC" id="uc002app.4">
    <molecule id="Q8TF46-1"/>
    <property type="organism name" value="human"/>
</dbReference>
<dbReference type="AGR" id="HGNC:28698"/>
<dbReference type="CTD" id="115752"/>
<dbReference type="DisGeNET" id="115752"/>
<dbReference type="GeneCards" id="DIS3L"/>
<dbReference type="HGNC" id="HGNC:28698">
    <property type="gene designation" value="DIS3L"/>
</dbReference>
<dbReference type="HPA" id="ENSG00000166938">
    <property type="expression patterns" value="Low tissue specificity"/>
</dbReference>
<dbReference type="MalaCards" id="DIS3L"/>
<dbReference type="MIM" id="614183">
    <property type="type" value="gene"/>
</dbReference>
<dbReference type="neXtProt" id="NX_Q8TF46"/>
<dbReference type="OpenTargets" id="ENSG00000166938"/>
<dbReference type="PharmGKB" id="PA162383675"/>
<dbReference type="VEuPathDB" id="HostDB:ENSG00000166938"/>
<dbReference type="eggNOG" id="KOG2102">
    <property type="taxonomic scope" value="Eukaryota"/>
</dbReference>
<dbReference type="GeneTree" id="ENSGT00530000063106"/>
<dbReference type="HOGENOM" id="CLU_002333_5_0_1"/>
<dbReference type="InParanoid" id="Q8TF46"/>
<dbReference type="OMA" id="VIRIDGW"/>
<dbReference type="OrthoDB" id="372421at2759"/>
<dbReference type="PAN-GO" id="Q8TF46">
    <property type="GO annotations" value="3 GO annotations based on evolutionary models"/>
</dbReference>
<dbReference type="PhylomeDB" id="Q8TF46"/>
<dbReference type="TreeFam" id="TF105755"/>
<dbReference type="PathwayCommons" id="Q8TF46"/>
<dbReference type="SignaLink" id="Q8TF46"/>
<dbReference type="SIGNOR" id="Q8TF46"/>
<dbReference type="BioGRID-ORCS" id="115752">
    <property type="hits" value="23 hits in 1149 CRISPR screens"/>
</dbReference>
<dbReference type="CD-CODE" id="232F8A39">
    <property type="entry name" value="P-body"/>
</dbReference>
<dbReference type="CD-CODE" id="DEE660B4">
    <property type="entry name" value="Stress granule"/>
</dbReference>
<dbReference type="ChiTaRS" id="DIS3L">
    <property type="organism name" value="human"/>
</dbReference>
<dbReference type="GeneWiki" id="DIS3L"/>
<dbReference type="GenomeRNAi" id="115752"/>
<dbReference type="Pharos" id="Q8TF46">
    <property type="development level" value="Tbio"/>
</dbReference>
<dbReference type="PRO" id="PR:Q8TF46"/>
<dbReference type="Proteomes" id="UP000005640">
    <property type="component" value="Chromosome 15"/>
</dbReference>
<dbReference type="RNAct" id="Q8TF46">
    <property type="molecule type" value="protein"/>
</dbReference>
<dbReference type="Bgee" id="ENSG00000166938">
    <property type="expression patterns" value="Expressed in left ventricle myocardium and 188 other cell types or tissues"/>
</dbReference>
<dbReference type="ExpressionAtlas" id="Q8TF46">
    <property type="expression patterns" value="baseline and differential"/>
</dbReference>
<dbReference type="GO" id="GO:0005813">
    <property type="term" value="C:centrosome"/>
    <property type="evidence" value="ECO:0000314"/>
    <property type="project" value="HPA"/>
</dbReference>
<dbReference type="GO" id="GO:0036064">
    <property type="term" value="C:ciliary basal body"/>
    <property type="evidence" value="ECO:0000314"/>
    <property type="project" value="HPA"/>
</dbReference>
<dbReference type="GO" id="GO:0000177">
    <property type="term" value="C:cytoplasmic exosome (RNase complex)"/>
    <property type="evidence" value="ECO:0000314"/>
    <property type="project" value="UniProtKB"/>
</dbReference>
<dbReference type="GO" id="GO:0005829">
    <property type="term" value="C:cytosol"/>
    <property type="evidence" value="ECO:0000314"/>
    <property type="project" value="HPA"/>
</dbReference>
<dbReference type="GO" id="GO:0005886">
    <property type="term" value="C:plasma membrane"/>
    <property type="evidence" value="ECO:0000314"/>
    <property type="project" value="HPA"/>
</dbReference>
<dbReference type="GO" id="GO:0000175">
    <property type="term" value="F:3'-5'-RNA exonuclease activity"/>
    <property type="evidence" value="ECO:0000314"/>
    <property type="project" value="UniProtKB"/>
</dbReference>
<dbReference type="GO" id="GO:0019899">
    <property type="term" value="F:enzyme binding"/>
    <property type="evidence" value="ECO:0000353"/>
    <property type="project" value="UniProtKB"/>
</dbReference>
<dbReference type="GO" id="GO:0008859">
    <property type="term" value="F:exoribonuclease II activity"/>
    <property type="evidence" value="ECO:0000314"/>
    <property type="project" value="UniProtKB"/>
</dbReference>
<dbReference type="GO" id="GO:0003723">
    <property type="term" value="F:RNA binding"/>
    <property type="evidence" value="ECO:0007669"/>
    <property type="project" value="UniProtKB-KW"/>
</dbReference>
<dbReference type="GO" id="GO:0006402">
    <property type="term" value="P:mRNA catabolic process"/>
    <property type="evidence" value="ECO:0000318"/>
    <property type="project" value="GO_Central"/>
</dbReference>
<dbReference type="GO" id="GO:0006401">
    <property type="term" value="P:RNA catabolic process"/>
    <property type="evidence" value="ECO:0000314"/>
    <property type="project" value="ComplexPortal"/>
</dbReference>
<dbReference type="GO" id="GO:0006396">
    <property type="term" value="P:RNA processing"/>
    <property type="evidence" value="ECO:0000314"/>
    <property type="project" value="ComplexPortal"/>
</dbReference>
<dbReference type="GO" id="GO:0016075">
    <property type="term" value="P:rRNA catabolic process"/>
    <property type="evidence" value="ECO:0000314"/>
    <property type="project" value="UniProtKB"/>
</dbReference>
<dbReference type="CDD" id="cd09862">
    <property type="entry name" value="PIN_Rrp44-like"/>
    <property type="match status" value="1"/>
</dbReference>
<dbReference type="FunFam" id="2.40.50.140:FF:000143">
    <property type="entry name" value="DIS3-like exonuclease 1 isoform X1"/>
    <property type="match status" value="1"/>
</dbReference>
<dbReference type="FunFam" id="2.40.50.690:FF:000004">
    <property type="entry name" value="DIS3-like exonuclease 1 isoform X1"/>
    <property type="match status" value="1"/>
</dbReference>
<dbReference type="FunFam" id="3.40.50.1010:FF:000021">
    <property type="entry name" value="DIS3-like exonuclease 1 isoform X1"/>
    <property type="match status" value="1"/>
</dbReference>
<dbReference type="FunFam" id="2.40.50.700:FF:000004">
    <property type="entry name" value="Exosome complex exonuclease RRP44 homolog A"/>
    <property type="match status" value="1"/>
</dbReference>
<dbReference type="Gene3D" id="2.40.50.690">
    <property type="match status" value="1"/>
</dbReference>
<dbReference type="Gene3D" id="2.40.50.700">
    <property type="match status" value="1"/>
</dbReference>
<dbReference type="Gene3D" id="3.40.50.1010">
    <property type="entry name" value="5'-nuclease"/>
    <property type="match status" value="1"/>
</dbReference>
<dbReference type="Gene3D" id="2.40.50.140">
    <property type="entry name" value="Nucleic acid-binding proteins"/>
    <property type="match status" value="1"/>
</dbReference>
<dbReference type="InterPro" id="IPR041505">
    <property type="entry name" value="Dis3_CSD2"/>
</dbReference>
<dbReference type="InterPro" id="IPR012340">
    <property type="entry name" value="NA-bd_OB-fold"/>
</dbReference>
<dbReference type="InterPro" id="IPR001900">
    <property type="entry name" value="RNase_II/R"/>
</dbReference>
<dbReference type="InterPro" id="IPR022966">
    <property type="entry name" value="RNase_II/R_CS"/>
</dbReference>
<dbReference type="InterPro" id="IPR050180">
    <property type="entry name" value="RNR_Ribonuclease"/>
</dbReference>
<dbReference type="InterPro" id="IPR033771">
    <property type="entry name" value="Rrp44_CSD1"/>
</dbReference>
<dbReference type="InterPro" id="IPR033770">
    <property type="entry name" value="RRP44_S1"/>
</dbReference>
<dbReference type="PANTHER" id="PTHR23355:SF30">
    <property type="entry name" value="DIS3-LIKE EXONUCLEASE 1"/>
    <property type="match status" value="1"/>
</dbReference>
<dbReference type="PANTHER" id="PTHR23355">
    <property type="entry name" value="RIBONUCLEASE"/>
    <property type="match status" value="1"/>
</dbReference>
<dbReference type="Pfam" id="PF17849">
    <property type="entry name" value="OB_Dis3"/>
    <property type="match status" value="1"/>
</dbReference>
<dbReference type="Pfam" id="PF00773">
    <property type="entry name" value="RNB"/>
    <property type="match status" value="1"/>
</dbReference>
<dbReference type="Pfam" id="PF17216">
    <property type="entry name" value="Rrp44_CSD1"/>
    <property type="match status" value="1"/>
</dbReference>
<dbReference type="Pfam" id="PF17215">
    <property type="entry name" value="Rrp44_S1"/>
    <property type="match status" value="1"/>
</dbReference>
<dbReference type="SMART" id="SM00955">
    <property type="entry name" value="RNB"/>
    <property type="match status" value="1"/>
</dbReference>
<dbReference type="SUPFAM" id="SSF50249">
    <property type="entry name" value="Nucleic acid-binding proteins"/>
    <property type="match status" value="3"/>
</dbReference>
<dbReference type="PROSITE" id="PS01175">
    <property type="entry name" value="RIBONUCLEASE_II"/>
    <property type="match status" value="1"/>
</dbReference>
<organism>
    <name type="scientific">Homo sapiens</name>
    <name type="common">Human</name>
    <dbReference type="NCBI Taxonomy" id="9606"/>
    <lineage>
        <taxon>Eukaryota</taxon>
        <taxon>Metazoa</taxon>
        <taxon>Chordata</taxon>
        <taxon>Craniata</taxon>
        <taxon>Vertebrata</taxon>
        <taxon>Euteleostomi</taxon>
        <taxon>Mammalia</taxon>
        <taxon>Eutheria</taxon>
        <taxon>Euarchontoglires</taxon>
        <taxon>Primates</taxon>
        <taxon>Haplorrhini</taxon>
        <taxon>Catarrhini</taxon>
        <taxon>Hominidae</taxon>
        <taxon>Homo</taxon>
    </lineage>
</organism>
<comment type="function">
    <text evidence="4 5 6">Catalytic component of the RNA exosome complex which has 3'-&gt;5' exoribonuclease activity and participates in a multitude of cellular RNA processing and degradation events (PubMed:20531386, PubMed:20531389, PubMed:37602378). In the cytoplasm, the RNA exosome complex is involved in general mRNA turnover and specifically degrades inherently unstable mRNAs containing AU-rich elements (AREs) within their 3' untranslated regions, and in RNA surveillance pathways, preventing translation of aberrant mRNAs. It seems to be involved in degradation of histone mRNA (PubMed:20531386, PubMed:20531389).</text>
</comment>
<comment type="catalytic activity">
    <reaction evidence="4 5 6">
        <text>Exonucleolytic cleavage in the 3'- to 5'-direction to yield nucleoside 5'-phosphates.</text>
        <dbReference type="EC" id="3.1.13.1"/>
    </reaction>
</comment>
<comment type="cofactor">
    <cofactor evidence="4 5">
        <name>Mg(2+)</name>
        <dbReference type="ChEBI" id="CHEBI:18420"/>
    </cofactor>
</comment>
<comment type="subunit">
    <text evidence="4 5">Component of the RNA exosome complex. The catalytically inactive RNA exosome core (Exo-9) complex is believed to associate with catalytic subunits EXOSC10, and DIS3 or DIS3L in cytoplasmic- and nuclear-specific RNA exosome complex forms.</text>
</comment>
<comment type="interaction">
    <interactant intactId="EBI-3672244">
        <id>Q8TF46</id>
    </interactant>
    <interactant intactId="EBI-371866">
        <id>Q9NQT5</id>
        <label>EXOSC3</label>
    </interactant>
    <organismsDiffer>false</organismsDiffer>
    <experiments>7</experiments>
</comment>
<comment type="interaction">
    <interactant intactId="EBI-3895807">
        <id>Q8TF46-1</id>
    </interactant>
    <interactant intactId="EBI-301735">
        <id>Q13868</id>
        <label>EXOSC2</label>
    </interactant>
    <organismsDiffer>false</organismsDiffer>
    <experiments>2</experiments>
</comment>
<comment type="interaction">
    <interactant intactId="EBI-25933135">
        <id>Q8TF46-4</id>
    </interactant>
    <interactant intactId="EBI-5235340">
        <id>Q7Z699</id>
        <label>SPRED1</label>
    </interactant>
    <organismsDiffer>false</organismsDiffer>
    <experiments>3</experiments>
</comment>
<comment type="subcellular location">
    <subcellularLocation>
        <location evidence="4 5">Cytoplasm</location>
    </subcellularLocation>
</comment>
<comment type="alternative products">
    <event type="alternative splicing"/>
    <isoform>
        <id>Q8TF46-1</id>
        <name>1</name>
        <sequence type="displayed"/>
    </isoform>
    <isoform>
        <id>Q8TF46-2</id>
        <name>2</name>
        <sequence type="described" ref="VSP_030366"/>
    </isoform>
    <isoform>
        <id>Q8TF46-3</id>
        <name>3</name>
        <sequence type="described" ref="VSP_030368 VSP_030369"/>
    </isoform>
    <isoform>
        <id>Q8TF46-4</id>
        <name>4</name>
        <sequence type="described" ref="VSP_030367"/>
    </isoform>
</comment>
<comment type="similarity">
    <text evidence="10">Belongs to the RNR ribonuclease family.</text>
</comment>
<comment type="sequence caution" evidence="10">
    <conflict type="erroneous initiation">
        <sequence resource="EMBL-CDS" id="BAB85541"/>
    </conflict>
    <text>Extended N-terminus.</text>
</comment>
<gene>
    <name type="primary">DIS3L</name>
    <name type="synonym">DIS3L1</name>
    <name type="synonym">KIAA1955</name>
</gene>
<accession>Q8TF46</accession>
<accession>Q8N1N8</accession>
<accession>Q8WTU9</accession>
<accession>Q96CM7</accession>
<evidence type="ECO:0000255" key="1"/>
<evidence type="ECO:0000269" key="2">
    <source>
    </source>
</evidence>
<evidence type="ECO:0000269" key="3">
    <source>
    </source>
</evidence>
<evidence type="ECO:0000269" key="4">
    <source>
    </source>
</evidence>
<evidence type="ECO:0000269" key="5">
    <source>
    </source>
</evidence>
<evidence type="ECO:0000269" key="6">
    <source>
    </source>
</evidence>
<evidence type="ECO:0000303" key="7">
    <source>
    </source>
</evidence>
<evidence type="ECO:0000303" key="8">
    <source>
    </source>
</evidence>
<evidence type="ECO:0000303" key="9">
    <source>
    </source>
</evidence>
<evidence type="ECO:0000305" key="10"/>
<evidence type="ECO:0007744" key="11">
    <source>
    </source>
</evidence>